<reference key="1">
    <citation type="journal article" date="2006" name="Proc. Natl. Acad. Sci. U.S.A.">
        <title>Comparative genomics of the lactic acid bacteria.</title>
        <authorList>
            <person name="Makarova K.S."/>
            <person name="Slesarev A."/>
            <person name="Wolf Y.I."/>
            <person name="Sorokin A."/>
            <person name="Mirkin B."/>
            <person name="Koonin E.V."/>
            <person name="Pavlov A."/>
            <person name="Pavlova N."/>
            <person name="Karamychev V."/>
            <person name="Polouchine N."/>
            <person name="Shakhova V."/>
            <person name="Grigoriev I."/>
            <person name="Lou Y."/>
            <person name="Rohksar D."/>
            <person name="Lucas S."/>
            <person name="Huang K."/>
            <person name="Goodstein D.M."/>
            <person name="Hawkins T."/>
            <person name="Plengvidhya V."/>
            <person name="Welker D."/>
            <person name="Hughes J."/>
            <person name="Goh Y."/>
            <person name="Benson A."/>
            <person name="Baldwin K."/>
            <person name="Lee J.-H."/>
            <person name="Diaz-Muniz I."/>
            <person name="Dosti B."/>
            <person name="Smeianov V."/>
            <person name="Wechter W."/>
            <person name="Barabote R."/>
            <person name="Lorca G."/>
            <person name="Altermann E."/>
            <person name="Barrangou R."/>
            <person name="Ganesan B."/>
            <person name="Xie Y."/>
            <person name="Rawsthorne H."/>
            <person name="Tamir D."/>
            <person name="Parker C."/>
            <person name="Breidt F."/>
            <person name="Broadbent J.R."/>
            <person name="Hutkins R."/>
            <person name="O'Sullivan D."/>
            <person name="Steele J."/>
            <person name="Unlu G."/>
            <person name="Saier M.H. Jr."/>
            <person name="Klaenhammer T."/>
            <person name="Richardson P."/>
            <person name="Kozyavkin S."/>
            <person name="Weimer B.C."/>
            <person name="Mills D.A."/>
        </authorList>
    </citation>
    <scope>NUCLEOTIDE SEQUENCE [LARGE SCALE GENOMIC DNA]</scope>
    <source>
        <strain>ATCC 33323 / DSM 20243 / BCRC 14619 / CIP 102991 / JCM 1131 / KCTC 3163 / NCIMB 11718 / NCTC 13722 / AM63</strain>
    </source>
</reference>
<dbReference type="EMBL" id="CP000413">
    <property type="protein sequence ID" value="ABJ59706.1"/>
    <property type="molecule type" value="Genomic_DNA"/>
</dbReference>
<dbReference type="RefSeq" id="WP_003647827.1">
    <property type="nucleotide sequence ID" value="NZ_WBMG01000001.1"/>
</dbReference>
<dbReference type="SMR" id="Q046B6"/>
<dbReference type="GeneID" id="83569763"/>
<dbReference type="KEGG" id="lga:LGAS_0300"/>
<dbReference type="HOGENOM" id="CLU_073626_1_0_9"/>
<dbReference type="BioCyc" id="LGAS324831:G1G6Y-298-MONOMER"/>
<dbReference type="Proteomes" id="UP000000664">
    <property type="component" value="Chromosome"/>
</dbReference>
<dbReference type="GO" id="GO:0022627">
    <property type="term" value="C:cytosolic small ribosomal subunit"/>
    <property type="evidence" value="ECO:0007669"/>
    <property type="project" value="TreeGrafter"/>
</dbReference>
<dbReference type="GO" id="GO:0019843">
    <property type="term" value="F:rRNA binding"/>
    <property type="evidence" value="ECO:0007669"/>
    <property type="project" value="UniProtKB-UniRule"/>
</dbReference>
<dbReference type="GO" id="GO:0003735">
    <property type="term" value="F:structural constituent of ribosome"/>
    <property type="evidence" value="ECO:0007669"/>
    <property type="project" value="InterPro"/>
</dbReference>
<dbReference type="GO" id="GO:0006412">
    <property type="term" value="P:translation"/>
    <property type="evidence" value="ECO:0007669"/>
    <property type="project" value="UniProtKB-UniRule"/>
</dbReference>
<dbReference type="CDD" id="cd00364">
    <property type="entry name" value="Ribosomal_uS17"/>
    <property type="match status" value="1"/>
</dbReference>
<dbReference type="Gene3D" id="2.40.50.140">
    <property type="entry name" value="Nucleic acid-binding proteins"/>
    <property type="match status" value="1"/>
</dbReference>
<dbReference type="HAMAP" id="MF_01345_B">
    <property type="entry name" value="Ribosomal_uS17_B"/>
    <property type="match status" value="1"/>
</dbReference>
<dbReference type="InterPro" id="IPR012340">
    <property type="entry name" value="NA-bd_OB-fold"/>
</dbReference>
<dbReference type="InterPro" id="IPR000266">
    <property type="entry name" value="Ribosomal_uS17"/>
</dbReference>
<dbReference type="InterPro" id="IPR019984">
    <property type="entry name" value="Ribosomal_uS17_bact/chlr"/>
</dbReference>
<dbReference type="InterPro" id="IPR019979">
    <property type="entry name" value="Ribosomal_uS17_CS"/>
</dbReference>
<dbReference type="NCBIfam" id="NF004123">
    <property type="entry name" value="PRK05610.1"/>
    <property type="match status" value="1"/>
</dbReference>
<dbReference type="NCBIfam" id="TIGR03635">
    <property type="entry name" value="uS17_bact"/>
    <property type="match status" value="1"/>
</dbReference>
<dbReference type="PANTHER" id="PTHR10744">
    <property type="entry name" value="40S RIBOSOMAL PROTEIN S11 FAMILY MEMBER"/>
    <property type="match status" value="1"/>
</dbReference>
<dbReference type="PANTHER" id="PTHR10744:SF1">
    <property type="entry name" value="SMALL RIBOSOMAL SUBUNIT PROTEIN US17M"/>
    <property type="match status" value="1"/>
</dbReference>
<dbReference type="Pfam" id="PF00366">
    <property type="entry name" value="Ribosomal_S17"/>
    <property type="match status" value="1"/>
</dbReference>
<dbReference type="PRINTS" id="PR00973">
    <property type="entry name" value="RIBOSOMALS17"/>
</dbReference>
<dbReference type="SUPFAM" id="SSF50249">
    <property type="entry name" value="Nucleic acid-binding proteins"/>
    <property type="match status" value="1"/>
</dbReference>
<dbReference type="PROSITE" id="PS00056">
    <property type="entry name" value="RIBOSOMAL_S17"/>
    <property type="match status" value="1"/>
</dbReference>
<comment type="function">
    <text evidence="1">One of the primary rRNA binding proteins, it binds specifically to the 5'-end of 16S ribosomal RNA.</text>
</comment>
<comment type="subunit">
    <text evidence="1">Part of the 30S ribosomal subunit.</text>
</comment>
<comment type="similarity">
    <text evidence="1">Belongs to the universal ribosomal protein uS17 family.</text>
</comment>
<name>RS17_LACGA</name>
<protein>
    <recommendedName>
        <fullName evidence="1">Small ribosomal subunit protein uS17</fullName>
    </recommendedName>
    <alternativeName>
        <fullName evidence="2">30S ribosomal protein S17</fullName>
    </alternativeName>
</protein>
<accession>Q046B6</accession>
<keyword id="KW-0687">Ribonucleoprotein</keyword>
<keyword id="KW-0689">Ribosomal protein</keyword>
<keyword id="KW-0694">RNA-binding</keyword>
<keyword id="KW-0699">rRNA-binding</keyword>
<feature type="chain" id="PRO_1000054969" description="Small ribosomal subunit protein uS17">
    <location>
        <begin position="1"/>
        <end position="88"/>
    </location>
</feature>
<proteinExistence type="inferred from homology"/>
<gene>
    <name evidence="1" type="primary">rpsQ</name>
    <name type="ordered locus">LGAS_0300</name>
</gene>
<sequence length="88" mass="10514">MSETNERNNRHVYQGRVVSDKMDKTITVVVDTYKNHPVYKKRIKYSKKYYAHDENNEAKIGDTVRIMETRPLSHAKRYRLTKIVKKSI</sequence>
<evidence type="ECO:0000255" key="1">
    <source>
        <dbReference type="HAMAP-Rule" id="MF_01345"/>
    </source>
</evidence>
<evidence type="ECO:0000305" key="2"/>
<organism>
    <name type="scientific">Lactobacillus gasseri (strain ATCC 33323 / DSM 20243 / BCRC 14619 / CIP 102991 / JCM 1131 / KCTC 3163 / NCIMB 11718 / NCTC 13722 / AM63)</name>
    <dbReference type="NCBI Taxonomy" id="324831"/>
    <lineage>
        <taxon>Bacteria</taxon>
        <taxon>Bacillati</taxon>
        <taxon>Bacillota</taxon>
        <taxon>Bacilli</taxon>
        <taxon>Lactobacillales</taxon>
        <taxon>Lactobacillaceae</taxon>
        <taxon>Lactobacillus</taxon>
    </lineage>
</organism>